<name>T126A_HUMAN</name>
<accession>Q9H061</accession>
<accession>B2R570</accession>
<accession>E9PI16</accession>
<reference key="1">
    <citation type="journal article" date="2001" name="Genome Res.">
        <title>Towards a catalog of human genes and proteins: sequencing and analysis of 500 novel complete protein coding human cDNAs.</title>
        <authorList>
            <person name="Wiemann S."/>
            <person name="Weil B."/>
            <person name="Wellenreuther R."/>
            <person name="Gassenhuber J."/>
            <person name="Glassl S."/>
            <person name="Ansorge W."/>
            <person name="Boecher M."/>
            <person name="Bloecker H."/>
            <person name="Bauersachs S."/>
            <person name="Blum H."/>
            <person name="Lauber J."/>
            <person name="Duesterhoeft A."/>
            <person name="Beyer A."/>
            <person name="Koehrer K."/>
            <person name="Strack N."/>
            <person name="Mewes H.-W."/>
            <person name="Ottenwaelder B."/>
            <person name="Obermaier B."/>
            <person name="Tampe J."/>
            <person name="Heubner D."/>
            <person name="Wambutt R."/>
            <person name="Korn B."/>
            <person name="Klein M."/>
            <person name="Poustka A."/>
        </authorList>
    </citation>
    <scope>NUCLEOTIDE SEQUENCE [LARGE SCALE MRNA] (ISOFORM 1)</scope>
    <source>
        <tissue>Uterus</tissue>
    </source>
</reference>
<reference key="2">
    <citation type="journal article" date="2004" name="Nat. Genet.">
        <title>Complete sequencing and characterization of 21,243 full-length human cDNAs.</title>
        <authorList>
            <person name="Ota T."/>
            <person name="Suzuki Y."/>
            <person name="Nishikawa T."/>
            <person name="Otsuki T."/>
            <person name="Sugiyama T."/>
            <person name="Irie R."/>
            <person name="Wakamatsu A."/>
            <person name="Hayashi K."/>
            <person name="Sato H."/>
            <person name="Nagai K."/>
            <person name="Kimura K."/>
            <person name="Makita H."/>
            <person name="Sekine M."/>
            <person name="Obayashi M."/>
            <person name="Nishi T."/>
            <person name="Shibahara T."/>
            <person name="Tanaka T."/>
            <person name="Ishii S."/>
            <person name="Yamamoto J."/>
            <person name="Saito K."/>
            <person name="Kawai Y."/>
            <person name="Isono Y."/>
            <person name="Nakamura Y."/>
            <person name="Nagahari K."/>
            <person name="Murakami K."/>
            <person name="Yasuda T."/>
            <person name="Iwayanagi T."/>
            <person name="Wagatsuma M."/>
            <person name="Shiratori A."/>
            <person name="Sudo H."/>
            <person name="Hosoiri T."/>
            <person name="Kaku Y."/>
            <person name="Kodaira H."/>
            <person name="Kondo H."/>
            <person name="Sugawara M."/>
            <person name="Takahashi M."/>
            <person name="Kanda K."/>
            <person name="Yokoi T."/>
            <person name="Furuya T."/>
            <person name="Kikkawa E."/>
            <person name="Omura Y."/>
            <person name="Abe K."/>
            <person name="Kamihara K."/>
            <person name="Katsuta N."/>
            <person name="Sato K."/>
            <person name="Tanikawa M."/>
            <person name="Yamazaki M."/>
            <person name="Ninomiya K."/>
            <person name="Ishibashi T."/>
            <person name="Yamashita H."/>
            <person name="Murakawa K."/>
            <person name="Fujimori K."/>
            <person name="Tanai H."/>
            <person name="Kimata M."/>
            <person name="Watanabe M."/>
            <person name="Hiraoka S."/>
            <person name="Chiba Y."/>
            <person name="Ishida S."/>
            <person name="Ono Y."/>
            <person name="Takiguchi S."/>
            <person name="Watanabe S."/>
            <person name="Yosida M."/>
            <person name="Hotuta T."/>
            <person name="Kusano J."/>
            <person name="Kanehori K."/>
            <person name="Takahashi-Fujii A."/>
            <person name="Hara H."/>
            <person name="Tanase T.-O."/>
            <person name="Nomura Y."/>
            <person name="Togiya S."/>
            <person name="Komai F."/>
            <person name="Hara R."/>
            <person name="Takeuchi K."/>
            <person name="Arita M."/>
            <person name="Imose N."/>
            <person name="Musashino K."/>
            <person name="Yuuki H."/>
            <person name="Oshima A."/>
            <person name="Sasaki N."/>
            <person name="Aotsuka S."/>
            <person name="Yoshikawa Y."/>
            <person name="Matsunawa H."/>
            <person name="Ichihara T."/>
            <person name="Shiohata N."/>
            <person name="Sano S."/>
            <person name="Moriya S."/>
            <person name="Momiyama H."/>
            <person name="Satoh N."/>
            <person name="Takami S."/>
            <person name="Terashima Y."/>
            <person name="Suzuki O."/>
            <person name="Nakagawa S."/>
            <person name="Senoh A."/>
            <person name="Mizoguchi H."/>
            <person name="Goto Y."/>
            <person name="Shimizu F."/>
            <person name="Wakebe H."/>
            <person name="Hishigaki H."/>
            <person name="Watanabe T."/>
            <person name="Sugiyama A."/>
            <person name="Takemoto M."/>
            <person name="Kawakami B."/>
            <person name="Yamazaki M."/>
            <person name="Watanabe K."/>
            <person name="Kumagai A."/>
            <person name="Itakura S."/>
            <person name="Fukuzumi Y."/>
            <person name="Fujimori Y."/>
            <person name="Komiyama M."/>
            <person name="Tashiro H."/>
            <person name="Tanigami A."/>
            <person name="Fujiwara T."/>
            <person name="Ono T."/>
            <person name="Yamada K."/>
            <person name="Fujii Y."/>
            <person name="Ozaki K."/>
            <person name="Hirao M."/>
            <person name="Ohmori Y."/>
            <person name="Kawabata A."/>
            <person name="Hikiji T."/>
            <person name="Kobatake N."/>
            <person name="Inagaki H."/>
            <person name="Ikema Y."/>
            <person name="Okamoto S."/>
            <person name="Okitani R."/>
            <person name="Kawakami T."/>
            <person name="Noguchi S."/>
            <person name="Itoh T."/>
            <person name="Shigeta K."/>
            <person name="Senba T."/>
            <person name="Matsumura K."/>
            <person name="Nakajima Y."/>
            <person name="Mizuno T."/>
            <person name="Morinaga M."/>
            <person name="Sasaki M."/>
            <person name="Togashi T."/>
            <person name="Oyama M."/>
            <person name="Hata H."/>
            <person name="Watanabe M."/>
            <person name="Komatsu T."/>
            <person name="Mizushima-Sugano J."/>
            <person name="Satoh T."/>
            <person name="Shirai Y."/>
            <person name="Takahashi Y."/>
            <person name="Nakagawa K."/>
            <person name="Okumura K."/>
            <person name="Nagase T."/>
            <person name="Nomura N."/>
            <person name="Kikuchi H."/>
            <person name="Masuho Y."/>
            <person name="Yamashita R."/>
            <person name="Nakai K."/>
            <person name="Yada T."/>
            <person name="Nakamura Y."/>
            <person name="Ohara O."/>
            <person name="Isogai T."/>
            <person name="Sugano S."/>
        </authorList>
    </citation>
    <scope>NUCLEOTIDE SEQUENCE [LARGE SCALE MRNA] (ISOFORM 1)</scope>
    <source>
        <tissue>Prostate</tissue>
    </source>
</reference>
<reference key="3">
    <citation type="journal article" date="2006" name="Nature">
        <title>Human chromosome 11 DNA sequence and analysis including novel gene identification.</title>
        <authorList>
            <person name="Taylor T.D."/>
            <person name="Noguchi H."/>
            <person name="Totoki Y."/>
            <person name="Toyoda A."/>
            <person name="Kuroki Y."/>
            <person name="Dewar K."/>
            <person name="Lloyd C."/>
            <person name="Itoh T."/>
            <person name="Takeda T."/>
            <person name="Kim D.-W."/>
            <person name="She X."/>
            <person name="Barlow K.F."/>
            <person name="Bloom T."/>
            <person name="Bruford E."/>
            <person name="Chang J.L."/>
            <person name="Cuomo C.A."/>
            <person name="Eichler E."/>
            <person name="FitzGerald M.G."/>
            <person name="Jaffe D.B."/>
            <person name="LaButti K."/>
            <person name="Nicol R."/>
            <person name="Park H.-S."/>
            <person name="Seaman C."/>
            <person name="Sougnez C."/>
            <person name="Yang X."/>
            <person name="Zimmer A.R."/>
            <person name="Zody M.C."/>
            <person name="Birren B.W."/>
            <person name="Nusbaum C."/>
            <person name="Fujiyama A."/>
            <person name="Hattori M."/>
            <person name="Rogers J."/>
            <person name="Lander E.S."/>
            <person name="Sakaki Y."/>
        </authorList>
    </citation>
    <scope>NUCLEOTIDE SEQUENCE [LARGE SCALE GENOMIC DNA]</scope>
</reference>
<reference key="4">
    <citation type="submission" date="2005-07" db="EMBL/GenBank/DDBJ databases">
        <authorList>
            <person name="Mural R.J."/>
            <person name="Istrail S."/>
            <person name="Sutton G.G."/>
            <person name="Florea L."/>
            <person name="Halpern A.L."/>
            <person name="Mobarry C.M."/>
            <person name="Lippert R."/>
            <person name="Walenz B."/>
            <person name="Shatkay H."/>
            <person name="Dew I."/>
            <person name="Miller J.R."/>
            <person name="Flanigan M.J."/>
            <person name="Edwards N.J."/>
            <person name="Bolanos R."/>
            <person name="Fasulo D."/>
            <person name="Halldorsson B.V."/>
            <person name="Hannenhalli S."/>
            <person name="Turner R."/>
            <person name="Yooseph S."/>
            <person name="Lu F."/>
            <person name="Nusskern D.R."/>
            <person name="Shue B.C."/>
            <person name="Zheng X.H."/>
            <person name="Zhong F."/>
            <person name="Delcher A.L."/>
            <person name="Huson D.H."/>
            <person name="Kravitz S.A."/>
            <person name="Mouchard L."/>
            <person name="Reinert K."/>
            <person name="Remington K.A."/>
            <person name="Clark A.G."/>
            <person name="Waterman M.S."/>
            <person name="Eichler E.E."/>
            <person name="Adams M.D."/>
            <person name="Hunkapiller M.W."/>
            <person name="Myers E.W."/>
            <person name="Venter J.C."/>
        </authorList>
    </citation>
    <scope>NUCLEOTIDE SEQUENCE [LARGE SCALE GENOMIC DNA]</scope>
</reference>
<reference key="5">
    <citation type="journal article" date="2004" name="Genome Res.">
        <title>The status, quality, and expansion of the NIH full-length cDNA project: the Mammalian Gene Collection (MGC).</title>
        <authorList>
            <consortium name="The MGC Project Team"/>
        </authorList>
    </citation>
    <scope>NUCLEOTIDE SEQUENCE [LARGE SCALE MRNA] (ISOFORM 1)</scope>
    <source>
        <tissue>Ovary</tissue>
    </source>
</reference>
<reference key="6">
    <citation type="journal article" date="2009" name="Am. J. Hum. Genet.">
        <title>TMEM126A, encoding a mitochondrial protein, is mutated in autosomal-recessive nonsyndromic optic atrophy.</title>
        <authorList>
            <person name="Hanein S."/>
            <person name="Perrault I."/>
            <person name="Roche O."/>
            <person name="Gerber S."/>
            <person name="Khadom N."/>
            <person name="Rio M."/>
            <person name="Boddaert N."/>
            <person name="Jean-Pierre M."/>
            <person name="Brahimi N."/>
            <person name="Serre V."/>
            <person name="Chretien D."/>
            <person name="Delphin N."/>
            <person name="Fares-Taie L."/>
            <person name="Lachheb S."/>
            <person name="Rotig A."/>
            <person name="Meire F."/>
            <person name="Munnich A."/>
            <person name="Dufier J.L."/>
            <person name="Kaplan J."/>
            <person name="Rozet J.M."/>
        </authorList>
    </citation>
    <scope>SUBCELLULAR LOCATION</scope>
    <scope>TISSUE SPECIFICITY</scope>
    <scope>INVOLVEMENT IN OPA7</scope>
    <scope>VARIANT OPA7 55-ARG--HIS-195 DEL</scope>
</reference>
<reference key="7">
    <citation type="journal article" date="2010" name="Mol. Vis.">
        <title>Nonsense mutation in TMEM126A causing autosomal recessive optic atrophy and auditory neuropathy.</title>
        <authorList>
            <person name="Meyer E."/>
            <person name="Michaelides M."/>
            <person name="Tee L.J."/>
            <person name="Robson A.G."/>
            <person name="Rahman F."/>
            <person name="Pasha S."/>
            <person name="Luxon L.M."/>
            <person name="Moore A.T."/>
            <person name="Maher E.R."/>
        </authorList>
    </citation>
    <scope>VARIANT OPA7 55-ARG--HIS-195 DEL</scope>
</reference>
<reference key="8">
    <citation type="journal article" date="2011" name="BMC Syst. Biol.">
        <title>Initial characterization of the human central proteome.</title>
        <authorList>
            <person name="Burkard T.R."/>
            <person name="Planyavsky M."/>
            <person name="Kaupe I."/>
            <person name="Breitwieser F.P."/>
            <person name="Buerckstuemmer T."/>
            <person name="Bennett K.L."/>
            <person name="Superti-Furga G."/>
            <person name="Colinge J."/>
        </authorList>
    </citation>
    <scope>IDENTIFICATION BY MASS SPECTROMETRY [LARGE SCALE ANALYSIS]</scope>
</reference>
<reference key="9">
    <citation type="journal article" date="2012" name="Mol. Vis.">
        <title>TMEM126A mutation in a Moroccan family with autosomal recessive optic atrophy.</title>
        <authorList>
            <person name="Desir J."/>
            <person name="Coppieters F."/>
            <person name="Van Regemorter N."/>
            <person name="De Baere E."/>
            <person name="Abramowicz M."/>
            <person name="Cordonnier M."/>
        </authorList>
    </citation>
    <scope>VARIANT OPA7 55-ARG--HIS-195 DEL</scope>
</reference>
<reference key="10">
    <citation type="journal article" date="2013" name="Biochim. Biophys. Acta">
        <title>TMEM126A is a mitochondrial located mRNA (MLR) protein of the mitochondrial inner membrane.</title>
        <authorList>
            <person name="Hanein S."/>
            <person name="Garcia M."/>
            <person name="Fares-Taie L."/>
            <person name="Serre V."/>
            <person name="De Keyzer Y."/>
            <person name="Delaveau T."/>
            <person name="Perrault I."/>
            <person name="Delphin N."/>
            <person name="Gerber S."/>
            <person name="Schmitt A."/>
            <person name="Masse J.M."/>
            <person name="Munnich A."/>
            <person name="Kaplan J."/>
            <person name="Devaux F."/>
            <person name="Rozet J.M."/>
        </authorList>
    </citation>
    <scope>SUBCELLULAR LOCATION</scope>
    <scope>TOPOLOGY</scope>
    <scope>TISSUE SPECIFICITY</scope>
</reference>
<reference key="11">
    <citation type="journal article" date="2015" name="Proteomics">
        <title>N-terminome analysis of the human mitochondrial proteome.</title>
        <authorList>
            <person name="Vaca Jacome A.S."/>
            <person name="Rabilloud T."/>
            <person name="Schaeffer-Reiss C."/>
            <person name="Rompais M."/>
            <person name="Ayoub D."/>
            <person name="Lane L."/>
            <person name="Bairoch A."/>
            <person name="Van Dorsselaer A."/>
            <person name="Carapito C."/>
        </authorList>
    </citation>
    <scope>IDENTIFICATION BY MASS SPECTROMETRY [LARGE SCALE ANALYSIS]</scope>
</reference>
<reference key="12">
    <citation type="journal article" date="2019" name="BMC Med. Genet.">
        <title>Novel likely pathogenic variants in TMEM126A identified in non-syndromic autosomal recessive optic atrophy: two case reports.</title>
        <authorList>
            <person name="Kloth K."/>
            <person name="Synofzik M."/>
            <person name="Kernstock C."/>
            <person name="Schimpf-Linzenbold S."/>
            <person name="Schuettauf F."/>
            <person name="Neu A."/>
            <person name="Wissinger B."/>
            <person name="Weisschuh N."/>
        </authorList>
    </citation>
    <scope>VARIANT OPA7 LEU-36</scope>
</reference>
<reference key="13">
    <citation type="journal article" date="2019" name="Neurol. Genet.">
        <title>First TMEM126A missense mutation in an Italian proband with optic atrophy and deafness.</title>
        <authorList>
            <person name="La Morgia C."/>
            <person name="Caporali L."/>
            <person name="Tagliavini F."/>
            <person name="Palombo F."/>
            <person name="Carbonelli M."/>
            <person name="Liguori R."/>
            <person name="Barboni P."/>
            <person name="Carelli V."/>
        </authorList>
    </citation>
    <scope>VARIANT OPA7 ARG-166</scope>
</reference>
<reference key="14">
    <citation type="journal article" date="2021" name="Cell Rep.">
        <title>NDUFS3 depletion permits complex I maturation and reveals TMEM126A/OPA7 as an assembly factor binding the ND4-module intermediate.</title>
        <authorList>
            <person name="D'Angelo L."/>
            <person name="Astro E."/>
            <person name="De Luise M."/>
            <person name="Kurelac I."/>
            <person name="Umesh-Ganesh N."/>
            <person name="Ding S."/>
            <person name="Fearnley I.M."/>
            <person name="Gasparre G."/>
            <person name="Zeviani M."/>
            <person name="Porcelli A.M."/>
            <person name="Fernandez-Vizarra E."/>
            <person name="Iommarini L."/>
        </authorList>
    </citation>
    <scope>FUNCTION</scope>
</reference>
<reference key="15">
    <citation type="journal article" date="2021" name="Proc. Natl. Acad. Sci. U.S.A.">
        <title>Optic atrophy-associated TMEM126A is an assembly factor for the ND4-module of mitochondrial complex I.</title>
        <authorList>
            <person name="Formosa L.E."/>
            <person name="Reljic B."/>
            <person name="Sharpe A.J."/>
            <person name="Hock D.H."/>
            <person name="Muellner-Wong L."/>
            <person name="Stroud D.A."/>
            <person name="Ryan M.T."/>
        </authorList>
    </citation>
    <scope>FUNCTION</scope>
</reference>
<reference key="16">
    <citation type="journal article" date="2024" name="Mol. Cell">
        <title>Identification of TMEM126A as OXA1L-interacting protein reveals cotranslational quality control in mitochondria.</title>
        <authorList>
            <person name="Poerschke S."/>
            <person name="Oeljeklaus S."/>
            <person name="Cruz-Zaragoza L.D."/>
            <person name="Schenzielorz A."/>
            <person name="Dahal D."/>
            <person name="Hillen H.S."/>
            <person name="Das H."/>
            <person name="Kremer L.S."/>
            <person name="Valpadashi A."/>
            <person name="Breuer M."/>
            <person name="Sattmann J."/>
            <person name="Richter-Dennerlein R."/>
            <person name="Warscheid B."/>
            <person name="Dennerlein S."/>
            <person name="Rehling P."/>
        </authorList>
    </citation>
    <scope>FUNCTION</scope>
    <scope>SUBCELLULAR LOCATION</scope>
    <scope>INTERACTION WITH OXA1L</scope>
</reference>
<sequence>MENHKSNNKENITIVDISRKINQLPEAERNLLENGSVYVGLNAALCGLIANSLFRRILNVTKARIAAGLPMAGIPFLTTDLTYRCFVSFPLNTGDLDCETCTITRSGLTGLVIGGLYPVFLAIPVNGGLAARYQSALLPHKGNILSYWIRTSKPVFRKMLFPILLQTMFSAYLGSEQYKLLIKALQLSEPGKEIH</sequence>
<keyword id="KW-0025">Alternative splicing</keyword>
<keyword id="KW-0472">Membrane</keyword>
<keyword id="KW-0496">Mitochondrion</keyword>
<keyword id="KW-0999">Mitochondrion inner membrane</keyword>
<keyword id="KW-1267">Proteomics identification</keyword>
<keyword id="KW-1185">Reference proteome</keyword>
<keyword id="KW-0812">Transmembrane</keyword>
<keyword id="KW-1133">Transmembrane helix</keyword>
<feature type="chain" id="PRO_0000270999" description="Transmembrane protein 126A">
    <location>
        <begin position="1"/>
        <end position="195"/>
    </location>
</feature>
<feature type="topological domain" description="Mitochondrial matrix" evidence="1">
    <location>
        <begin position="1"/>
        <end position="33"/>
    </location>
</feature>
<feature type="transmembrane region" description="Helical" evidence="1">
    <location>
        <begin position="34"/>
        <end position="54"/>
    </location>
</feature>
<feature type="topological domain" description="Mitochondrial intermembrane" evidence="1">
    <location>
        <begin position="55"/>
        <end position="56"/>
    </location>
</feature>
<feature type="transmembrane region" description="Helical" evidence="1">
    <location>
        <begin position="57"/>
        <end position="77"/>
    </location>
</feature>
<feature type="topological domain" description="Mitochondrial matrix" evidence="1">
    <location>
        <begin position="78"/>
        <end position="110"/>
    </location>
</feature>
<feature type="transmembrane region" description="Helical" evidence="1">
    <location>
        <begin position="111"/>
        <end position="131"/>
    </location>
</feature>
<feature type="topological domain" description="Mitochondrial intermembrane" evidence="1">
    <location>
        <begin position="132"/>
        <end position="158"/>
    </location>
</feature>
<feature type="transmembrane region" description="Helical" evidence="1">
    <location>
        <begin position="159"/>
        <end position="175"/>
    </location>
</feature>
<feature type="topological domain" description="Mitochondrial matrix" evidence="1">
    <location>
        <begin position="176"/>
        <end position="195"/>
    </location>
</feature>
<feature type="splice variant" id="VSP_046927" description="In isoform 2." evidence="12">
    <location>
        <begin position="1"/>
        <end position="70"/>
    </location>
</feature>
<feature type="sequence variant" id="VAR_089095" description="In OPA7; likely pathogenic; dbSNP:rs984312982." evidence="6">
    <original>S</original>
    <variation>L</variation>
    <location>
        <position position="36"/>
    </location>
</feature>
<feature type="sequence variant" id="VAR_089096" description="In OPA7." evidence="2 3 4">
    <location>
        <begin position="55"/>
        <end position="195"/>
    </location>
</feature>
<feature type="sequence variant" id="VAR_053817" description="In dbSNP:rs11556797.">
    <original>R</original>
    <variation>H</variation>
    <location>
        <position position="64"/>
    </location>
</feature>
<feature type="sequence variant" id="VAR_089097" description="In OPA7; uncertain significance; dbSNP:rs150267785." evidence="7">
    <original>Q</original>
    <variation>R</variation>
    <location>
        <position position="166"/>
    </location>
</feature>
<protein>
    <recommendedName>
        <fullName evidence="12">Transmembrane protein 126A</fullName>
    </recommendedName>
</protein>
<evidence type="ECO:0000255" key="1"/>
<evidence type="ECO:0000269" key="2">
    <source>
    </source>
</evidence>
<evidence type="ECO:0000269" key="3">
    <source>
    </source>
</evidence>
<evidence type="ECO:0000269" key="4">
    <source>
    </source>
</evidence>
<evidence type="ECO:0000269" key="5">
    <source>
    </source>
</evidence>
<evidence type="ECO:0000269" key="6">
    <source>
    </source>
</evidence>
<evidence type="ECO:0000269" key="7">
    <source>
    </source>
</evidence>
<evidence type="ECO:0000269" key="8">
    <source>
    </source>
</evidence>
<evidence type="ECO:0000269" key="9">
    <source>
    </source>
</evidence>
<evidence type="ECO:0000269" key="10">
    <source>
    </source>
</evidence>
<evidence type="ECO:0000303" key="11">
    <source>
    </source>
</evidence>
<evidence type="ECO:0000305" key="12"/>
<evidence type="ECO:0000312" key="13">
    <source>
        <dbReference type="HGNC" id="HGNC:25382"/>
    </source>
</evidence>
<dbReference type="EMBL" id="AL136941">
    <property type="protein sequence ID" value="CAB66875.1"/>
    <property type="molecule type" value="mRNA"/>
</dbReference>
<dbReference type="EMBL" id="AK312081">
    <property type="protein sequence ID" value="BAG35017.1"/>
    <property type="molecule type" value="mRNA"/>
</dbReference>
<dbReference type="EMBL" id="AP000642">
    <property type="status" value="NOT_ANNOTATED_CDS"/>
    <property type="molecule type" value="Genomic_DNA"/>
</dbReference>
<dbReference type="EMBL" id="CH471076">
    <property type="protein sequence ID" value="EAW75102.1"/>
    <property type="molecule type" value="Genomic_DNA"/>
</dbReference>
<dbReference type="EMBL" id="BC007875">
    <property type="protein sequence ID" value="AAH07875.1"/>
    <property type="molecule type" value="mRNA"/>
</dbReference>
<dbReference type="CCDS" id="CCDS58165.1">
    <molecule id="Q9H061-2"/>
</dbReference>
<dbReference type="CCDS" id="CCDS8268.1">
    <molecule id="Q9H061-1"/>
</dbReference>
<dbReference type="RefSeq" id="NP_001231664.1">
    <molecule id="Q9H061-2"/>
    <property type="nucleotide sequence ID" value="NM_001244735.2"/>
</dbReference>
<dbReference type="RefSeq" id="NP_115649.1">
    <molecule id="Q9H061-1"/>
    <property type="nucleotide sequence ID" value="NM_032273.4"/>
</dbReference>
<dbReference type="BioGRID" id="123966">
    <property type="interactions" value="172"/>
</dbReference>
<dbReference type="FunCoup" id="Q9H061">
    <property type="interactions" value="1281"/>
</dbReference>
<dbReference type="IntAct" id="Q9H061">
    <property type="interactions" value="70"/>
</dbReference>
<dbReference type="MINT" id="Q9H061"/>
<dbReference type="STRING" id="9606.ENSP00000306887"/>
<dbReference type="TCDB" id="9.B.317.1.2">
    <property type="family name" value="the complex i integral membrane chaperone, tmem126 (tmem126) family"/>
</dbReference>
<dbReference type="GlyGen" id="Q9H061">
    <property type="glycosylation" value="2 sites, 1 N-linked glycan (1 site), 1 O-linked glycan (1 site)"/>
</dbReference>
<dbReference type="iPTMnet" id="Q9H061"/>
<dbReference type="PhosphoSitePlus" id="Q9H061"/>
<dbReference type="SwissPalm" id="Q9H061"/>
<dbReference type="BioMuta" id="TMEM126A"/>
<dbReference type="DMDM" id="74733515"/>
<dbReference type="jPOST" id="Q9H061"/>
<dbReference type="MassIVE" id="Q9H061"/>
<dbReference type="PaxDb" id="9606-ENSP00000306887"/>
<dbReference type="PeptideAtlas" id="Q9H061"/>
<dbReference type="ProteomicsDB" id="20659"/>
<dbReference type="ProteomicsDB" id="80205">
    <molecule id="Q9H061-1"/>
</dbReference>
<dbReference type="Pumba" id="Q9H061"/>
<dbReference type="TopDownProteomics" id="Q9H061-1">
    <molecule id="Q9H061-1"/>
</dbReference>
<dbReference type="Antibodypedia" id="53167">
    <property type="antibodies" value="19 antibodies from 11 providers"/>
</dbReference>
<dbReference type="DNASU" id="84233"/>
<dbReference type="Ensembl" id="ENST00000304511.7">
    <molecule id="Q9H061-1"/>
    <property type="protein sequence ID" value="ENSP00000306887.2"/>
    <property type="gene ID" value="ENSG00000171202.7"/>
</dbReference>
<dbReference type="Ensembl" id="ENST00000528105.5">
    <molecule id="Q9H061-2"/>
    <property type="protein sequence ID" value="ENSP00000436590.1"/>
    <property type="gene ID" value="ENSG00000171202.7"/>
</dbReference>
<dbReference type="Ensembl" id="ENST00000532180.1">
    <molecule id="Q9H061-2"/>
    <property type="protein sequence ID" value="ENSP00000434357.1"/>
    <property type="gene ID" value="ENSG00000171202.7"/>
</dbReference>
<dbReference type="GeneID" id="84233"/>
<dbReference type="KEGG" id="hsa:84233"/>
<dbReference type="MANE-Select" id="ENST00000304511.7">
    <property type="protein sequence ID" value="ENSP00000306887.2"/>
    <property type="RefSeq nucleotide sequence ID" value="NM_032273.4"/>
    <property type="RefSeq protein sequence ID" value="NP_115649.1"/>
</dbReference>
<dbReference type="UCSC" id="uc001par.4">
    <molecule id="Q9H061-1"/>
    <property type="organism name" value="human"/>
</dbReference>
<dbReference type="AGR" id="HGNC:25382"/>
<dbReference type="CTD" id="84233"/>
<dbReference type="DisGeNET" id="84233"/>
<dbReference type="GeneCards" id="TMEM126A"/>
<dbReference type="HGNC" id="HGNC:25382">
    <property type="gene designation" value="TMEM126A"/>
</dbReference>
<dbReference type="HPA" id="ENSG00000171202">
    <property type="expression patterns" value="Low tissue specificity"/>
</dbReference>
<dbReference type="MalaCards" id="TMEM126A"/>
<dbReference type="MIM" id="612988">
    <property type="type" value="gene"/>
</dbReference>
<dbReference type="MIM" id="612989">
    <property type="type" value="phenotype"/>
</dbReference>
<dbReference type="neXtProt" id="NX_Q9H061"/>
<dbReference type="OpenTargets" id="ENSG00000171202"/>
<dbReference type="Orphanet" id="227976">
    <property type="disease" value="Autosomal recessive optic atrophy, OPA7 type"/>
</dbReference>
<dbReference type="PharmGKB" id="PA143485645"/>
<dbReference type="VEuPathDB" id="HostDB:ENSG00000171202"/>
<dbReference type="eggNOG" id="ENOG502RYF0">
    <property type="taxonomic scope" value="Eukaryota"/>
</dbReference>
<dbReference type="GeneTree" id="ENSGT00520000055616"/>
<dbReference type="HOGENOM" id="CLU_1991866_0_0_1"/>
<dbReference type="InParanoid" id="Q9H061"/>
<dbReference type="OMA" id="GDLHCET"/>
<dbReference type="OrthoDB" id="6234762at2759"/>
<dbReference type="PAN-GO" id="Q9H061">
    <property type="GO annotations" value="2 GO annotations based on evolutionary models"/>
</dbReference>
<dbReference type="PhylomeDB" id="Q9H061"/>
<dbReference type="TreeFam" id="TF327069"/>
<dbReference type="PathwayCommons" id="Q9H061"/>
<dbReference type="Reactome" id="R-HSA-6799198">
    <property type="pathway name" value="Complex I biogenesis"/>
</dbReference>
<dbReference type="SignaLink" id="Q9H061"/>
<dbReference type="BioGRID-ORCS" id="84233">
    <property type="hits" value="14 hits in 1164 CRISPR screens"/>
</dbReference>
<dbReference type="CD-CODE" id="FB4E32DD">
    <property type="entry name" value="Presynaptic clusters and postsynaptic densities"/>
</dbReference>
<dbReference type="ChiTaRS" id="TMEM126A">
    <property type="organism name" value="human"/>
</dbReference>
<dbReference type="GeneWiki" id="TMEM126A"/>
<dbReference type="GenomeRNAi" id="84233"/>
<dbReference type="Pharos" id="Q9H061">
    <property type="development level" value="Tbio"/>
</dbReference>
<dbReference type="PRO" id="PR:Q9H061"/>
<dbReference type="Proteomes" id="UP000005640">
    <property type="component" value="Chromosome 11"/>
</dbReference>
<dbReference type="RNAct" id="Q9H061">
    <property type="molecule type" value="protein"/>
</dbReference>
<dbReference type="Bgee" id="ENSG00000171202">
    <property type="expression patterns" value="Expressed in left ventricle myocardium and 181 other cell types or tissues"/>
</dbReference>
<dbReference type="ExpressionAtlas" id="Q9H061">
    <property type="expression patterns" value="baseline and differential"/>
</dbReference>
<dbReference type="GO" id="GO:0005743">
    <property type="term" value="C:mitochondrial inner membrane"/>
    <property type="evidence" value="ECO:0000314"/>
    <property type="project" value="UniProtKB"/>
</dbReference>
<dbReference type="GO" id="GO:0005739">
    <property type="term" value="C:mitochondrion"/>
    <property type="evidence" value="ECO:0000314"/>
    <property type="project" value="UniProtKB"/>
</dbReference>
<dbReference type="GO" id="GO:0005886">
    <property type="term" value="C:plasma membrane"/>
    <property type="evidence" value="ECO:0007669"/>
    <property type="project" value="Ensembl"/>
</dbReference>
<dbReference type="GO" id="GO:0141164">
    <property type="term" value="P:mitochondrial protein quality control"/>
    <property type="evidence" value="ECO:0000314"/>
    <property type="project" value="UniProtKB"/>
</dbReference>
<dbReference type="GO" id="GO:0032981">
    <property type="term" value="P:mitochondrial respiratory chain complex I assembly"/>
    <property type="evidence" value="ECO:0000315"/>
    <property type="project" value="UniProtKB"/>
</dbReference>
<dbReference type="GO" id="GO:0021554">
    <property type="term" value="P:optic nerve development"/>
    <property type="evidence" value="ECO:0000315"/>
    <property type="project" value="BHF-UCL"/>
</dbReference>
<dbReference type="GO" id="GO:0032979">
    <property type="term" value="P:protein insertion into mitochondrial inner membrane from matrix"/>
    <property type="evidence" value="ECO:0000314"/>
    <property type="project" value="UniProtKB"/>
</dbReference>
<dbReference type="GO" id="GO:0034142">
    <property type="term" value="P:toll-like receptor 4 signaling pathway"/>
    <property type="evidence" value="ECO:0007669"/>
    <property type="project" value="Ensembl"/>
</dbReference>
<dbReference type="InterPro" id="IPR009801">
    <property type="entry name" value="TMEM126"/>
</dbReference>
<dbReference type="PANTHER" id="PTHR16296:SF4">
    <property type="entry name" value="TRANSMEMBRANE PROTEIN 126A"/>
    <property type="match status" value="1"/>
</dbReference>
<dbReference type="PANTHER" id="PTHR16296">
    <property type="entry name" value="UNCHARACTERIZED HYPOTHALAMUS PROTEIN HT007"/>
    <property type="match status" value="1"/>
</dbReference>
<dbReference type="Pfam" id="PF07114">
    <property type="entry name" value="TMEM126"/>
    <property type="match status" value="1"/>
</dbReference>
<organism>
    <name type="scientific">Homo sapiens</name>
    <name type="common">Human</name>
    <dbReference type="NCBI Taxonomy" id="9606"/>
    <lineage>
        <taxon>Eukaryota</taxon>
        <taxon>Metazoa</taxon>
        <taxon>Chordata</taxon>
        <taxon>Craniata</taxon>
        <taxon>Vertebrata</taxon>
        <taxon>Euteleostomi</taxon>
        <taxon>Mammalia</taxon>
        <taxon>Eutheria</taxon>
        <taxon>Euarchontoglires</taxon>
        <taxon>Primates</taxon>
        <taxon>Haplorrhini</taxon>
        <taxon>Catarrhini</taxon>
        <taxon>Hominidae</taxon>
        <taxon>Homo</taxon>
    </lineage>
</organism>
<gene>
    <name evidence="11 13" type="primary">TMEM126A</name>
</gene>
<proteinExistence type="evidence at protein level"/>
<comment type="function">
    <text evidence="8 9 10">Protein required for the cotranslational protein quality control in the inner membrane of the mitochondria (PubMed:38199007). Associates with newly synthesized polypeptides and may act as a chaperone that cooperates with OXA1L for the insertion of newly synthesized mitochondrial proteins into the inner membrane (PubMed:38199007). Required for the assembly of the ND4 module of mitochondrial complex I (PubMed:33879611, PubMed:33882309).</text>
</comment>
<comment type="subunit">
    <text evidence="10">Interacts with OXA1L; promoting cotranslational quality control in mitochondria.</text>
</comment>
<comment type="subcellular location">
    <subcellularLocation>
        <location evidence="2 5 10">Mitochondrion inner membrane</location>
        <topology evidence="2 5">Multi-pass membrane protein</topology>
    </subcellularLocation>
</comment>
<comment type="alternative products">
    <event type="alternative splicing"/>
    <isoform>
        <id>Q9H061-1</id>
        <name>1</name>
        <sequence type="displayed"/>
    </isoform>
    <isoform>
        <id>Q9H061-2</id>
        <name>2</name>
        <sequence type="described" ref="VSP_046927"/>
    </isoform>
</comment>
<comment type="tissue specificity">
    <text evidence="2 5">Strongly expressed in brain, cerebellum, skeletal muscle, testis. High expression also found in fetal brain, fetal retinal pigmentary epithelium, and fetal retina. Highly expressed in retinal ganglion cells.</text>
</comment>
<comment type="disease" evidence="2 3 4 6 7">
    <disease id="DI-02531">
        <name>Optic atrophy 7 with or without auditory neuropathy</name>
        <acronym>OPA7</acronym>
        <description>A hereditary condition that features progressive visual loss in association with optic atrophy. Atrophy of the optic disk indicates a deficiency in the number of nerve fibers which arise in the retina and converge to form the optic disk, optic nerve, optic chiasm and optic tracts. OPA7 is an autosomal recessive juvenile-onset optic atrophy characterized by severe bilateral deficiency in visual acuity, optic disk pallor, and central scotoma. Some patients manifest hearing loss.</description>
        <dbReference type="MIM" id="612989"/>
    </disease>
    <text>The disease is caused by variants affecting the gene represented in this entry.</text>
</comment>
<comment type="similarity">
    <text evidence="12">Belongs to the TMEM126 family.</text>
</comment>